<proteinExistence type="inferred from homology"/>
<evidence type="ECO:0000255" key="1">
    <source>
        <dbReference type="HAMAP-Rule" id="MF_01862"/>
    </source>
</evidence>
<evidence type="ECO:0000305" key="2"/>
<feature type="chain" id="PRO_0000369781" description="Ribosomal RNA small subunit methyltransferase C">
    <location>
        <begin position="1"/>
        <end position="342"/>
    </location>
</feature>
<dbReference type="EC" id="2.1.1.172" evidence="1"/>
<dbReference type="EMBL" id="CP000444">
    <property type="protein sequence ID" value="ABI44317.1"/>
    <property type="status" value="ALT_INIT"/>
    <property type="molecule type" value="Genomic_DNA"/>
</dbReference>
<dbReference type="SMR" id="Q0HRD8"/>
<dbReference type="KEGG" id="shm:Shewmr7_3335"/>
<dbReference type="HOGENOM" id="CLU_049581_0_1_6"/>
<dbReference type="GO" id="GO:0005737">
    <property type="term" value="C:cytoplasm"/>
    <property type="evidence" value="ECO:0007669"/>
    <property type="project" value="UniProtKB-SubCell"/>
</dbReference>
<dbReference type="GO" id="GO:0052914">
    <property type="term" value="F:16S rRNA (guanine(1207)-N(2))-methyltransferase activity"/>
    <property type="evidence" value="ECO:0007669"/>
    <property type="project" value="UniProtKB-EC"/>
</dbReference>
<dbReference type="GO" id="GO:0003676">
    <property type="term" value="F:nucleic acid binding"/>
    <property type="evidence" value="ECO:0007669"/>
    <property type="project" value="InterPro"/>
</dbReference>
<dbReference type="CDD" id="cd02440">
    <property type="entry name" value="AdoMet_MTases"/>
    <property type="match status" value="1"/>
</dbReference>
<dbReference type="Gene3D" id="3.40.50.150">
    <property type="entry name" value="Vaccinia Virus protein VP39"/>
    <property type="match status" value="2"/>
</dbReference>
<dbReference type="HAMAP" id="MF_01862">
    <property type="entry name" value="16SrRNA_methyltr_C"/>
    <property type="match status" value="1"/>
</dbReference>
<dbReference type="InterPro" id="IPR002052">
    <property type="entry name" value="DNA_methylase_N6_adenine_CS"/>
</dbReference>
<dbReference type="InterPro" id="IPR013675">
    <property type="entry name" value="Mtase_sm_N"/>
</dbReference>
<dbReference type="InterPro" id="IPR023543">
    <property type="entry name" value="rRNA_ssu_MeTfrase_C"/>
</dbReference>
<dbReference type="InterPro" id="IPR046977">
    <property type="entry name" value="RsmC/RlmG"/>
</dbReference>
<dbReference type="InterPro" id="IPR029063">
    <property type="entry name" value="SAM-dependent_MTases_sf"/>
</dbReference>
<dbReference type="InterPro" id="IPR007848">
    <property type="entry name" value="Small_mtfrase_dom"/>
</dbReference>
<dbReference type="PANTHER" id="PTHR47816">
    <property type="entry name" value="RIBOSOMAL RNA SMALL SUBUNIT METHYLTRANSFERASE C"/>
    <property type="match status" value="1"/>
</dbReference>
<dbReference type="PANTHER" id="PTHR47816:SF4">
    <property type="entry name" value="RIBOSOMAL RNA SMALL SUBUNIT METHYLTRANSFERASE C"/>
    <property type="match status" value="1"/>
</dbReference>
<dbReference type="Pfam" id="PF05175">
    <property type="entry name" value="MTS"/>
    <property type="match status" value="1"/>
</dbReference>
<dbReference type="Pfam" id="PF08468">
    <property type="entry name" value="MTS_N"/>
    <property type="match status" value="1"/>
</dbReference>
<dbReference type="SUPFAM" id="SSF53335">
    <property type="entry name" value="S-adenosyl-L-methionine-dependent methyltransferases"/>
    <property type="match status" value="1"/>
</dbReference>
<gene>
    <name evidence="1" type="primary">rsmC</name>
    <name type="ordered locus">Shewmr7_3335</name>
</gene>
<sequence length="342" mass="37073">MLTNPSQVIIRNQETLSQHRVLVLNHEADSLPKALLDVAQSVDALALDYHHYLHLAPQANAKLRCYFGHQLPHQDKYDTVIVYFPKAKPLAPYLFNLAAQHLVADGQLLVVGENKGGVKSLVKLLPKYFATGVKLDNARHCLLFGSSIIDTAPEIKLSDWTSQYQLATPQGNITICNLVGVFSEKHLDQGTELLLSHLPTLSGRVLDFGCGAGVIAAALLKAQPTLSLECIDINAMALASCELTLAANGMTAKVYPSDGLAQTSGKFDGIISNPPFHDGLASTTSIAQSFVADSAKQLQSKGIWQIVANRHLPYSDTIAAEFGQLTVPAENNKYKLYSFQQA</sequence>
<reference key="1">
    <citation type="submission" date="2006-08" db="EMBL/GenBank/DDBJ databases">
        <title>Complete sequence of chromosome 1 of Shewanella sp. MR-7.</title>
        <authorList>
            <person name="Copeland A."/>
            <person name="Lucas S."/>
            <person name="Lapidus A."/>
            <person name="Barry K."/>
            <person name="Detter J.C."/>
            <person name="Glavina del Rio T."/>
            <person name="Hammon N."/>
            <person name="Israni S."/>
            <person name="Dalin E."/>
            <person name="Tice H."/>
            <person name="Pitluck S."/>
            <person name="Kiss H."/>
            <person name="Brettin T."/>
            <person name="Bruce D."/>
            <person name="Han C."/>
            <person name="Tapia R."/>
            <person name="Gilna P."/>
            <person name="Schmutz J."/>
            <person name="Larimer F."/>
            <person name="Land M."/>
            <person name="Hauser L."/>
            <person name="Kyrpides N."/>
            <person name="Mikhailova N."/>
            <person name="Nealson K."/>
            <person name="Konstantinidis K."/>
            <person name="Klappenbach J."/>
            <person name="Tiedje J."/>
            <person name="Richardson P."/>
        </authorList>
    </citation>
    <scope>NUCLEOTIDE SEQUENCE [LARGE SCALE GENOMIC DNA]</scope>
    <source>
        <strain>MR-7</strain>
    </source>
</reference>
<accession>Q0HRD8</accession>
<protein>
    <recommendedName>
        <fullName evidence="1">Ribosomal RNA small subunit methyltransferase C</fullName>
        <ecNumber evidence="1">2.1.1.172</ecNumber>
    </recommendedName>
    <alternativeName>
        <fullName evidence="1">16S rRNA m2G1207 methyltransferase</fullName>
    </alternativeName>
    <alternativeName>
        <fullName evidence="1">rRNA (guanine-N(2)-)-methyltransferase RsmC</fullName>
    </alternativeName>
</protein>
<name>RSMC_SHESR</name>
<organism>
    <name type="scientific">Shewanella sp. (strain MR-7)</name>
    <dbReference type="NCBI Taxonomy" id="60481"/>
    <lineage>
        <taxon>Bacteria</taxon>
        <taxon>Pseudomonadati</taxon>
        <taxon>Pseudomonadota</taxon>
        <taxon>Gammaproteobacteria</taxon>
        <taxon>Alteromonadales</taxon>
        <taxon>Shewanellaceae</taxon>
        <taxon>Shewanella</taxon>
    </lineage>
</organism>
<keyword id="KW-0963">Cytoplasm</keyword>
<keyword id="KW-0489">Methyltransferase</keyword>
<keyword id="KW-0698">rRNA processing</keyword>
<keyword id="KW-0949">S-adenosyl-L-methionine</keyword>
<keyword id="KW-0808">Transferase</keyword>
<comment type="function">
    <text evidence="1">Specifically methylates the guanine in position 1207 of 16S rRNA in the 30S particle.</text>
</comment>
<comment type="catalytic activity">
    <reaction evidence="1">
        <text>guanosine(1207) in 16S rRNA + S-adenosyl-L-methionine = N(2)-methylguanosine(1207) in 16S rRNA + S-adenosyl-L-homocysteine + H(+)</text>
        <dbReference type="Rhea" id="RHEA:42736"/>
        <dbReference type="Rhea" id="RHEA-COMP:10213"/>
        <dbReference type="Rhea" id="RHEA-COMP:10214"/>
        <dbReference type="ChEBI" id="CHEBI:15378"/>
        <dbReference type="ChEBI" id="CHEBI:57856"/>
        <dbReference type="ChEBI" id="CHEBI:59789"/>
        <dbReference type="ChEBI" id="CHEBI:74269"/>
        <dbReference type="ChEBI" id="CHEBI:74481"/>
        <dbReference type="EC" id="2.1.1.172"/>
    </reaction>
</comment>
<comment type="subunit">
    <text evidence="1">Monomer.</text>
</comment>
<comment type="subcellular location">
    <subcellularLocation>
        <location evidence="1">Cytoplasm</location>
    </subcellularLocation>
</comment>
<comment type="similarity">
    <text evidence="1">Belongs to the methyltransferase superfamily. RsmC family.</text>
</comment>
<comment type="sequence caution" evidence="2">
    <conflict type="erroneous initiation">
        <sequence resource="EMBL-CDS" id="ABI44317"/>
    </conflict>
</comment>